<proteinExistence type="evidence at transcript level"/>
<keyword id="KW-0963">Cytoplasm</keyword>
<keyword id="KW-0539">Nucleus</keyword>
<keyword id="KW-1185">Reference proteome</keyword>
<comment type="function">
    <text evidence="2 7">Inhibitor of the serine/threonine-protein kinase pak4/pak5 (By similarity). Acts by binding pak4/pak5 in a substrate-like manner, inhibiting the protein kinase activity (By similarity). Required for the proper migration of neural crest cells during embryonic development, probably by inhibiting pak4/pak5 (PubMed:17314132).</text>
</comment>
<comment type="subunit">
    <text evidence="1">Interacts with pak4/pak5.</text>
</comment>
<comment type="subcellular location">
    <subcellularLocation>
        <location evidence="2">Nucleus</location>
    </subcellularLocation>
    <subcellularLocation>
        <location evidence="2">Cytoplasm</location>
    </subcellularLocation>
</comment>
<comment type="induction">
    <text evidence="4">Expression is regulated by the transcription factor AP-2-alpha/tfap2a.</text>
</comment>
<comment type="domain">
    <text evidence="2">Contains 2 Inka boxes (also named iBox or inca box). The Inka boxes bind and inhibit PAK4 by binding a substrate-like manner.</text>
</comment>
<comment type="disruption phenotype">
    <text evidence="4">Dramatic reduction in craniofacial cartilage formation.</text>
</comment>
<comment type="similarity">
    <text evidence="6">Belongs to the INKA family.</text>
</comment>
<comment type="sequence caution" evidence="6">
    <conflict type="erroneous initiation">
        <sequence resource="EMBL-CDS" id="AAH95263"/>
    </conflict>
    <text>Extended N-terminus.</text>
</comment>
<dbReference type="EMBL" id="CT963136">
    <property type="status" value="NOT_ANNOTATED_CDS"/>
    <property type="molecule type" value="Genomic_DNA"/>
</dbReference>
<dbReference type="EMBL" id="BC095263">
    <property type="protein sequence ID" value="AAH95263.1"/>
    <property type="status" value="ALT_INIT"/>
    <property type="molecule type" value="mRNA"/>
</dbReference>
<dbReference type="EMBL" id="BC116520">
    <property type="protein sequence ID" value="AAI16521.1"/>
    <property type="molecule type" value="mRNA"/>
</dbReference>
<dbReference type="EMBL" id="BC129272">
    <property type="protein sequence ID" value="AAI29273.1"/>
    <property type="molecule type" value="mRNA"/>
</dbReference>
<dbReference type="RefSeq" id="NP_001073457.1">
    <property type="nucleotide sequence ID" value="NM_001079988.1"/>
</dbReference>
<dbReference type="FunCoup" id="F1QR98">
    <property type="interactions" value="984"/>
</dbReference>
<dbReference type="STRING" id="7955.ENSDARP00000105046"/>
<dbReference type="PaxDb" id="7955-ENSDARP00000105046"/>
<dbReference type="Ensembl" id="ENSDART00000124800">
    <property type="protein sequence ID" value="ENSDARP00000105046"/>
    <property type="gene ID" value="ENSDARG00000070360"/>
</dbReference>
<dbReference type="GeneID" id="692272"/>
<dbReference type="KEGG" id="dre:692272"/>
<dbReference type="AGR" id="ZFIN:ZDB-GENE-060512-186"/>
<dbReference type="CTD" id="692272"/>
<dbReference type="ZFIN" id="ZDB-GENE-060512-186">
    <property type="gene designation" value="inka1a"/>
</dbReference>
<dbReference type="eggNOG" id="ENOG502RXEK">
    <property type="taxonomic scope" value="Eukaryota"/>
</dbReference>
<dbReference type="HOGENOM" id="CLU_077157_0_0_1"/>
<dbReference type="InParanoid" id="F1QR98"/>
<dbReference type="OMA" id="FFHKSHI"/>
<dbReference type="OrthoDB" id="8811265at2759"/>
<dbReference type="TreeFam" id="TF332839"/>
<dbReference type="PRO" id="PR:F1QR98"/>
<dbReference type="Proteomes" id="UP000000437">
    <property type="component" value="Chromosome 11"/>
</dbReference>
<dbReference type="Bgee" id="ENSDARG00000070360">
    <property type="expression patterns" value="Expressed in olfactory system and 43 other cell types or tissues"/>
</dbReference>
<dbReference type="GO" id="GO:0005737">
    <property type="term" value="C:cytoplasm"/>
    <property type="evidence" value="ECO:0000250"/>
    <property type="project" value="UniProtKB"/>
</dbReference>
<dbReference type="GO" id="GO:0005634">
    <property type="term" value="C:nucleus"/>
    <property type="evidence" value="ECO:0000250"/>
    <property type="project" value="UniProtKB"/>
</dbReference>
<dbReference type="GO" id="GO:0019901">
    <property type="term" value="F:protein kinase binding"/>
    <property type="evidence" value="ECO:0000318"/>
    <property type="project" value="GO_Central"/>
</dbReference>
<dbReference type="GO" id="GO:0030291">
    <property type="term" value="F:protein serine/threonine kinase inhibitor activity"/>
    <property type="evidence" value="ECO:0000250"/>
    <property type="project" value="UniProtKB"/>
</dbReference>
<dbReference type="GO" id="GO:0001502">
    <property type="term" value="P:cartilage condensation"/>
    <property type="evidence" value="ECO:0000315"/>
    <property type="project" value="ZFIN"/>
</dbReference>
<dbReference type="GO" id="GO:0051216">
    <property type="term" value="P:cartilage development"/>
    <property type="evidence" value="ECO:0000315"/>
    <property type="project" value="ZFIN"/>
</dbReference>
<dbReference type="Gene3D" id="3.30.200.20">
    <property type="entry name" value="Phosphorylase Kinase, domain 1"/>
    <property type="match status" value="1"/>
</dbReference>
<dbReference type="InterPro" id="IPR029267">
    <property type="entry name" value="FAM212"/>
</dbReference>
<dbReference type="InterPro" id="IPR039201">
    <property type="entry name" value="Inka"/>
</dbReference>
<dbReference type="PANTHER" id="PTHR28615:SF1">
    <property type="entry name" value="PAK4-INHIBITOR INKA1"/>
    <property type="match status" value="1"/>
</dbReference>
<dbReference type="PANTHER" id="PTHR28615">
    <property type="entry name" value="PAK4-INHIBITOR INKA1-RELATED"/>
    <property type="match status" value="1"/>
</dbReference>
<dbReference type="Pfam" id="PF15342">
    <property type="entry name" value="FAM212"/>
    <property type="match status" value="1"/>
</dbReference>
<gene>
    <name evidence="8" type="primary">fam212aa</name>
    <name type="synonym">inka1a</name>
</gene>
<protein>
    <recommendedName>
        <fullName evidence="6">PAK4-inhibitor inka1</fullName>
    </recommendedName>
    <alternativeName>
        <fullName evidence="5">Induced in neural crest by AP2-alpha protein 1</fullName>
        <shortName evidence="5">zinca1</shortName>
    </alternativeName>
</protein>
<name>INK1A_DANRE</name>
<sequence length="308" mass="34700">MLCLQESGDCLRDQMRYMMRSLQDLKHLRRSCVAPPVGPPVRLRACKQLIAQRERRARLRISDASEASSYDSACCLSSSLEEEESASDPSAVSSPSSERSLEFDSGYSEASWQDEGVVLRRTKNIRVSSTACLRTNQLSNTRARPKSTSDACLESWTSFETASDPEDWTTSLLTRGRNRQPLVLGDNSFADLIHNWMDLPECPEQTELKHSSGRSFAKDFLVNIKRRIAGFSRSADGRRKSSDVTKLSKSIVPTKRLSCQIDVQHKMPFFYKSHTGLNELDTDYYQFSALMKSGSRTPIVCNDIIGYI</sequence>
<feature type="chain" id="PRO_0000438816" description="PAK4-inhibitor inka1">
    <location>
        <begin position="1"/>
        <end position="308"/>
    </location>
</feature>
<feature type="region of interest" description="Disordered" evidence="3">
    <location>
        <begin position="81"/>
        <end position="105"/>
    </location>
</feature>
<feature type="region of interest" description="Inka box 1" evidence="2">
    <location>
        <begin position="164"/>
        <end position="201"/>
    </location>
</feature>
<feature type="region of interest" description="Inka box 2" evidence="2">
    <location>
        <begin position="281"/>
        <end position="308"/>
    </location>
</feature>
<feature type="compositionally biased region" description="Low complexity" evidence="3">
    <location>
        <begin position="87"/>
        <end position="98"/>
    </location>
</feature>
<feature type="sequence conflict" description="In Ref. 2; AAH95263." evidence="6" ref="2">
    <original>R</original>
    <variation>W</variation>
    <location>
        <position position="30"/>
    </location>
</feature>
<feature type="sequence conflict" description="In Ref. 2; AAI16521/AAH95263." evidence="6" ref="2">
    <original>TRA</original>
    <variation>SRV</variation>
    <location>
        <begin position="141"/>
        <end position="143"/>
    </location>
</feature>
<feature type="sequence conflict" description="In Ref. 2; AAH95263." evidence="6" ref="2">
    <original>N</original>
    <variation>S</variation>
    <location>
        <position position="195"/>
    </location>
</feature>
<feature type="sequence conflict" description="In Ref. 2; AAI29273." evidence="6" ref="2">
    <original>W</original>
    <variation>R</variation>
    <location>
        <position position="196"/>
    </location>
</feature>
<feature type="sequence conflict" description="In Ref. 2; AAI16521/AAH95263." evidence="6" ref="2">
    <original>I</original>
    <variation>V</variation>
    <location>
        <position position="224"/>
    </location>
</feature>
<feature type="sequence conflict" description="In Ref. 2; AAI16521." evidence="6" ref="2">
    <original>S</original>
    <variation>N</variation>
    <location>
        <position position="234"/>
    </location>
</feature>
<feature type="sequence conflict" description="In Ref. 2; AAI16521." evidence="6" ref="2">
    <original>K</original>
    <variation>R</variation>
    <location>
        <position position="249"/>
    </location>
</feature>
<feature type="sequence conflict" description="In Ref. 2; AAI16521." evidence="6" ref="2">
    <original>P</original>
    <variation>S</variation>
    <location>
        <position position="268"/>
    </location>
</feature>
<accession>F1QR98</accession>
<accession>A1L1Y9</accession>
<accession>Q1JQ16</accession>
<accession>Q503M7</accession>
<organism>
    <name type="scientific">Danio rerio</name>
    <name type="common">Zebrafish</name>
    <name type="synonym">Brachydanio rerio</name>
    <dbReference type="NCBI Taxonomy" id="7955"/>
    <lineage>
        <taxon>Eukaryota</taxon>
        <taxon>Metazoa</taxon>
        <taxon>Chordata</taxon>
        <taxon>Craniata</taxon>
        <taxon>Vertebrata</taxon>
        <taxon>Euteleostomi</taxon>
        <taxon>Actinopterygii</taxon>
        <taxon>Neopterygii</taxon>
        <taxon>Teleostei</taxon>
        <taxon>Ostariophysi</taxon>
        <taxon>Cypriniformes</taxon>
        <taxon>Danionidae</taxon>
        <taxon>Danioninae</taxon>
        <taxon>Danio</taxon>
    </lineage>
</organism>
<evidence type="ECO:0000250" key="1">
    <source>
        <dbReference type="UniProtKB" id="A7LKB2"/>
    </source>
</evidence>
<evidence type="ECO:0000250" key="2">
    <source>
        <dbReference type="UniProtKB" id="Q96EL1"/>
    </source>
</evidence>
<evidence type="ECO:0000256" key="3">
    <source>
        <dbReference type="SAM" id="MobiDB-lite"/>
    </source>
</evidence>
<evidence type="ECO:0000269" key="4">
    <source>
    </source>
</evidence>
<evidence type="ECO:0000303" key="5">
    <source>
    </source>
</evidence>
<evidence type="ECO:0000305" key="6"/>
<evidence type="ECO:0000305" key="7">
    <source>
    </source>
</evidence>
<evidence type="ECO:0000312" key="8">
    <source>
        <dbReference type="ZFIN" id="ZDB-GENE-060512-186"/>
    </source>
</evidence>
<reference key="1">
    <citation type="journal article" date="2013" name="Nature">
        <title>The zebrafish reference genome sequence and its relationship to the human genome.</title>
        <authorList>
            <person name="Howe K."/>
            <person name="Clark M.D."/>
            <person name="Torroja C.F."/>
            <person name="Torrance J."/>
            <person name="Berthelot C."/>
            <person name="Muffato M."/>
            <person name="Collins J.E."/>
            <person name="Humphray S."/>
            <person name="McLaren K."/>
            <person name="Matthews L."/>
            <person name="McLaren S."/>
            <person name="Sealy I."/>
            <person name="Caccamo M."/>
            <person name="Churcher C."/>
            <person name="Scott C."/>
            <person name="Barrett J.C."/>
            <person name="Koch R."/>
            <person name="Rauch G.J."/>
            <person name="White S."/>
            <person name="Chow W."/>
            <person name="Kilian B."/>
            <person name="Quintais L.T."/>
            <person name="Guerra-Assuncao J.A."/>
            <person name="Zhou Y."/>
            <person name="Gu Y."/>
            <person name="Yen J."/>
            <person name="Vogel J.H."/>
            <person name="Eyre T."/>
            <person name="Redmond S."/>
            <person name="Banerjee R."/>
            <person name="Chi J."/>
            <person name="Fu B."/>
            <person name="Langley E."/>
            <person name="Maguire S.F."/>
            <person name="Laird G.K."/>
            <person name="Lloyd D."/>
            <person name="Kenyon E."/>
            <person name="Donaldson S."/>
            <person name="Sehra H."/>
            <person name="Almeida-King J."/>
            <person name="Loveland J."/>
            <person name="Trevanion S."/>
            <person name="Jones M."/>
            <person name="Quail M."/>
            <person name="Willey D."/>
            <person name="Hunt A."/>
            <person name="Burton J."/>
            <person name="Sims S."/>
            <person name="McLay K."/>
            <person name="Plumb B."/>
            <person name="Davis J."/>
            <person name="Clee C."/>
            <person name="Oliver K."/>
            <person name="Clark R."/>
            <person name="Riddle C."/>
            <person name="Elliot D."/>
            <person name="Threadgold G."/>
            <person name="Harden G."/>
            <person name="Ware D."/>
            <person name="Begum S."/>
            <person name="Mortimore B."/>
            <person name="Kerry G."/>
            <person name="Heath P."/>
            <person name="Phillimore B."/>
            <person name="Tracey A."/>
            <person name="Corby N."/>
            <person name="Dunn M."/>
            <person name="Johnson C."/>
            <person name="Wood J."/>
            <person name="Clark S."/>
            <person name="Pelan S."/>
            <person name="Griffiths G."/>
            <person name="Smith M."/>
            <person name="Glithero R."/>
            <person name="Howden P."/>
            <person name="Barker N."/>
            <person name="Lloyd C."/>
            <person name="Stevens C."/>
            <person name="Harley J."/>
            <person name="Holt K."/>
            <person name="Panagiotidis G."/>
            <person name="Lovell J."/>
            <person name="Beasley H."/>
            <person name="Henderson C."/>
            <person name="Gordon D."/>
            <person name="Auger K."/>
            <person name="Wright D."/>
            <person name="Collins J."/>
            <person name="Raisen C."/>
            <person name="Dyer L."/>
            <person name="Leung K."/>
            <person name="Robertson L."/>
            <person name="Ambridge K."/>
            <person name="Leongamornlert D."/>
            <person name="McGuire S."/>
            <person name="Gilderthorp R."/>
            <person name="Griffiths C."/>
            <person name="Manthravadi D."/>
            <person name="Nichol S."/>
            <person name="Barker G."/>
            <person name="Whitehead S."/>
            <person name="Kay M."/>
            <person name="Brown J."/>
            <person name="Murnane C."/>
            <person name="Gray E."/>
            <person name="Humphries M."/>
            <person name="Sycamore N."/>
            <person name="Barker D."/>
            <person name="Saunders D."/>
            <person name="Wallis J."/>
            <person name="Babbage A."/>
            <person name="Hammond S."/>
            <person name="Mashreghi-Mohammadi M."/>
            <person name="Barr L."/>
            <person name="Martin S."/>
            <person name="Wray P."/>
            <person name="Ellington A."/>
            <person name="Matthews N."/>
            <person name="Ellwood M."/>
            <person name="Woodmansey R."/>
            <person name="Clark G."/>
            <person name="Cooper J."/>
            <person name="Tromans A."/>
            <person name="Grafham D."/>
            <person name="Skuce C."/>
            <person name="Pandian R."/>
            <person name="Andrews R."/>
            <person name="Harrison E."/>
            <person name="Kimberley A."/>
            <person name="Garnett J."/>
            <person name="Fosker N."/>
            <person name="Hall R."/>
            <person name="Garner P."/>
            <person name="Kelly D."/>
            <person name="Bird C."/>
            <person name="Palmer S."/>
            <person name="Gehring I."/>
            <person name="Berger A."/>
            <person name="Dooley C.M."/>
            <person name="Ersan-Urun Z."/>
            <person name="Eser C."/>
            <person name="Geiger H."/>
            <person name="Geisler M."/>
            <person name="Karotki L."/>
            <person name="Kirn A."/>
            <person name="Konantz J."/>
            <person name="Konantz M."/>
            <person name="Oberlander M."/>
            <person name="Rudolph-Geiger S."/>
            <person name="Teucke M."/>
            <person name="Lanz C."/>
            <person name="Raddatz G."/>
            <person name="Osoegawa K."/>
            <person name="Zhu B."/>
            <person name="Rapp A."/>
            <person name="Widaa S."/>
            <person name="Langford C."/>
            <person name="Yang F."/>
            <person name="Schuster S.C."/>
            <person name="Carter N.P."/>
            <person name="Harrow J."/>
            <person name="Ning Z."/>
            <person name="Herrero J."/>
            <person name="Searle S.M."/>
            <person name="Enright A."/>
            <person name="Geisler R."/>
            <person name="Plasterk R.H."/>
            <person name="Lee C."/>
            <person name="Westerfield M."/>
            <person name="de Jong P.J."/>
            <person name="Zon L.I."/>
            <person name="Postlethwait J.H."/>
            <person name="Nusslein-Volhard C."/>
            <person name="Hubbard T.J."/>
            <person name="Roest Crollius H."/>
            <person name="Rogers J."/>
            <person name="Stemple D.L."/>
        </authorList>
    </citation>
    <scope>NUCLEOTIDE SEQUENCE [LARGE SCALE GENOMIC DNA]</scope>
    <source>
        <strain>Tuebingen</strain>
    </source>
</reference>
<reference key="2">
    <citation type="submission" date="2006-05" db="EMBL/GenBank/DDBJ databases">
        <authorList>
            <consortium name="NIH - Zebrafish Gene Collection (ZGC) project"/>
        </authorList>
    </citation>
    <scope>NUCLEOTIDE SEQUENCE [LARGE SCALE MRNA]</scope>
    <source>
        <tissue>Embryo</tissue>
    </source>
</reference>
<reference key="3">
    <citation type="journal article" date="2007" name="Development">
        <title>Inca: a novel p21-activated kinase-associated protein required for cranial neural crest development.</title>
        <authorList>
            <person name="Luo T."/>
            <person name="Xu Y."/>
            <person name="Hoffman T.L."/>
            <person name="Zhang T."/>
            <person name="Schilling T."/>
            <person name="Sargent T.D."/>
        </authorList>
    </citation>
    <scope>FUNCTION</scope>
    <scope>INDUCTION</scope>
    <scope>DISRUPTION PHENOTYPE</scope>
</reference>